<reference key="1">
    <citation type="journal article" date="2002" name="J. Bacteriol.">
        <title>Whole-genome comparison of Mycobacterium tuberculosis clinical and laboratory strains.</title>
        <authorList>
            <person name="Fleischmann R.D."/>
            <person name="Alland D."/>
            <person name="Eisen J.A."/>
            <person name="Carpenter L."/>
            <person name="White O."/>
            <person name="Peterson J.D."/>
            <person name="DeBoy R.T."/>
            <person name="Dodson R.J."/>
            <person name="Gwinn M.L."/>
            <person name="Haft D.H."/>
            <person name="Hickey E.K."/>
            <person name="Kolonay J.F."/>
            <person name="Nelson W.C."/>
            <person name="Umayam L.A."/>
            <person name="Ermolaeva M.D."/>
            <person name="Salzberg S.L."/>
            <person name="Delcher A."/>
            <person name="Utterback T.R."/>
            <person name="Weidman J.F."/>
            <person name="Khouri H.M."/>
            <person name="Gill J."/>
            <person name="Mikula A."/>
            <person name="Bishai W."/>
            <person name="Jacobs W.R. Jr."/>
            <person name="Venter J.C."/>
            <person name="Fraser C.M."/>
        </authorList>
    </citation>
    <scope>NUCLEOTIDE SEQUENCE [LARGE SCALE GENOMIC DNA]</scope>
    <source>
        <strain>CDC 1551 / Oshkosh</strain>
    </source>
</reference>
<dbReference type="EC" id="2.1.1.79"/>
<dbReference type="EMBL" id="AE000516">
    <property type="protein sequence ID" value="AAK44747.1"/>
    <property type="status" value="ALT_INIT"/>
    <property type="molecule type" value="Genomic_DNA"/>
</dbReference>
<dbReference type="PIR" id="B70746">
    <property type="entry name" value="B70746"/>
</dbReference>
<dbReference type="RefSeq" id="WP_003402621.1">
    <property type="nucleotide sequence ID" value="NZ_KK341227.1"/>
</dbReference>
<dbReference type="SMR" id="P9WPB4"/>
<dbReference type="KEGG" id="mtc:MT0524"/>
<dbReference type="PATRIC" id="fig|83331.31.peg.555"/>
<dbReference type="HOGENOM" id="CLU_026434_3_0_11"/>
<dbReference type="UniPathway" id="UPA00915"/>
<dbReference type="Proteomes" id="UP000001020">
    <property type="component" value="Chromosome"/>
</dbReference>
<dbReference type="GO" id="GO:0005737">
    <property type="term" value="C:cytoplasm"/>
    <property type="evidence" value="ECO:0007669"/>
    <property type="project" value="UniProtKB-SubCell"/>
</dbReference>
<dbReference type="GO" id="GO:0008825">
    <property type="term" value="F:cyclopropane-fatty-acyl-phospholipid synthase activity"/>
    <property type="evidence" value="ECO:0007669"/>
    <property type="project" value="UniProtKB-EC"/>
</dbReference>
<dbReference type="GO" id="GO:0008610">
    <property type="term" value="P:lipid biosynthetic process"/>
    <property type="evidence" value="ECO:0007669"/>
    <property type="project" value="InterPro"/>
</dbReference>
<dbReference type="GO" id="GO:0032259">
    <property type="term" value="P:methylation"/>
    <property type="evidence" value="ECO:0007669"/>
    <property type="project" value="UniProtKB-KW"/>
</dbReference>
<dbReference type="CDD" id="cd02440">
    <property type="entry name" value="AdoMet_MTases"/>
    <property type="match status" value="1"/>
</dbReference>
<dbReference type="FunFam" id="3.40.50.150:FF:000115">
    <property type="entry name" value="Cyclopropane mycolic acid synthase 1"/>
    <property type="match status" value="1"/>
</dbReference>
<dbReference type="Gene3D" id="3.40.50.150">
    <property type="entry name" value="Vaccinia Virus protein VP39"/>
    <property type="match status" value="1"/>
</dbReference>
<dbReference type="InterPro" id="IPR050723">
    <property type="entry name" value="CFA/CMAS"/>
</dbReference>
<dbReference type="InterPro" id="IPR003333">
    <property type="entry name" value="CMAS"/>
</dbReference>
<dbReference type="InterPro" id="IPR047672">
    <property type="entry name" value="CMAS_actinobact"/>
</dbReference>
<dbReference type="InterPro" id="IPR029063">
    <property type="entry name" value="SAM-dependent_MTases_sf"/>
</dbReference>
<dbReference type="NCBIfam" id="NF040660">
    <property type="entry name" value="mycolic_MTase"/>
    <property type="match status" value="1"/>
</dbReference>
<dbReference type="PANTHER" id="PTHR43667">
    <property type="entry name" value="CYCLOPROPANE-FATTY-ACYL-PHOSPHOLIPID SYNTHASE"/>
    <property type="match status" value="1"/>
</dbReference>
<dbReference type="PANTHER" id="PTHR43667:SF1">
    <property type="entry name" value="CYCLOPROPANE-FATTY-ACYL-PHOSPHOLIPID SYNTHASE"/>
    <property type="match status" value="1"/>
</dbReference>
<dbReference type="Pfam" id="PF02353">
    <property type="entry name" value="CMAS"/>
    <property type="match status" value="1"/>
</dbReference>
<dbReference type="PIRSF" id="PIRSF003085">
    <property type="entry name" value="CMAS"/>
    <property type="match status" value="1"/>
</dbReference>
<dbReference type="SUPFAM" id="SSF53335">
    <property type="entry name" value="S-adenosyl-L-methionine-dependent methyltransferases"/>
    <property type="match status" value="1"/>
</dbReference>
<keyword id="KW-0963">Cytoplasm</keyword>
<keyword id="KW-0444">Lipid biosynthesis</keyword>
<keyword id="KW-0443">Lipid metabolism</keyword>
<keyword id="KW-0489">Methyltransferase</keyword>
<keyword id="KW-1185">Reference proteome</keyword>
<keyword id="KW-0949">S-adenosyl-L-methionine</keyword>
<keyword id="KW-0808">Transferase</keyword>
<name>CMAS2_MYCTO</name>
<feature type="chain" id="PRO_0000426981" description="Cyclopropane mycolic acid synthase 2">
    <location>
        <begin position="1"/>
        <end position="302"/>
    </location>
</feature>
<feature type="active site" evidence="1">
    <location>
        <position position="284"/>
    </location>
</feature>
<feature type="binding site" evidence="1">
    <location>
        <begin position="41"/>
        <end position="42"/>
    </location>
    <ligand>
        <name>S-adenosyl-L-methionine</name>
        <dbReference type="ChEBI" id="CHEBI:59789"/>
    </ligand>
</feature>
<feature type="binding site" evidence="1">
    <location>
        <begin position="76"/>
        <end position="84"/>
    </location>
    <ligand>
        <name>S-adenosyl-L-methionine</name>
        <dbReference type="ChEBI" id="CHEBI:59789"/>
    </ligand>
</feature>
<feature type="binding site" evidence="1">
    <location>
        <begin position="102"/>
        <end position="107"/>
    </location>
    <ligand>
        <name>S-adenosyl-L-methionine</name>
        <dbReference type="ChEBI" id="CHEBI:59789"/>
    </ligand>
</feature>
<feature type="binding site" evidence="1">
    <location>
        <begin position="131"/>
        <end position="132"/>
    </location>
    <ligand>
        <name>S-adenosyl-L-methionine</name>
        <dbReference type="ChEBI" id="CHEBI:59789"/>
    </ligand>
</feature>
<protein>
    <recommendedName>
        <fullName>Cyclopropane mycolic acid synthase 2</fullName>
        <shortName>CMAS</shortName>
        <ecNumber>2.1.1.79</ecNumber>
    </recommendedName>
    <alternativeName>
        <fullName>Cyclopropane-fatty-acyl-phospholipid synthase</fullName>
        <shortName>CFA synthase</shortName>
        <shortName>Cyclopropane fatty acid synthase</shortName>
    </alternativeName>
    <alternativeName>
        <fullName>Mycolic acid methyltransferase</fullName>
        <shortName>MA-MT</shortName>
    </alternativeName>
    <alternativeName>
        <fullName>S-adenosylmethionine-dependent methyltransferase</fullName>
        <shortName>AdoMet-MT</shortName>
        <shortName>SAM-MT</shortName>
    </alternativeName>
</protein>
<evidence type="ECO:0000250" key="1"/>
<evidence type="ECO:0000305" key="2"/>
<proteinExistence type="inferred from homology"/>
<comment type="function">
    <text evidence="1">Catalyzes the formation of trans cyclopropanated ketomycolate or methoxymycolate through the conversion of a double bond to a cyclopropane ring at the proximal position of an oxygenated mycolic acid via the transfer of a methylene group from S-adenosyl-L-methionine.</text>
</comment>
<comment type="catalytic activity">
    <reaction>
        <text>a 1-acyl-2-(9Z)-enoyl-sn-glycero-3-phospholipid + S-adenosyl-L-methionine = a 1-acyl-2-(9-cyclopronane)-acyl-sn-glycero-3-phospholipid + S-adenosyl-L-homocysteine + H(+)</text>
        <dbReference type="Rhea" id="RHEA:11988"/>
        <dbReference type="ChEBI" id="CHEBI:15378"/>
        <dbReference type="ChEBI" id="CHEBI:57856"/>
        <dbReference type="ChEBI" id="CHEBI:59789"/>
        <dbReference type="ChEBI" id="CHEBI:76593"/>
        <dbReference type="ChEBI" id="CHEBI:76594"/>
        <dbReference type="EC" id="2.1.1.79"/>
    </reaction>
</comment>
<comment type="pathway">
    <text>Lipid metabolism; mycolic acid biosynthesis.</text>
</comment>
<comment type="subunit">
    <text evidence="1">Homodimer.</text>
</comment>
<comment type="subcellular location">
    <subcellularLocation>
        <location evidence="1">Cytoplasm</location>
    </subcellularLocation>
</comment>
<comment type="similarity">
    <text evidence="2">Belongs to the CFA/CMAS family.</text>
</comment>
<comment type="sequence caution" evidence="2">
    <conflict type="erroneous initiation">
        <sequence resource="EMBL-CDS" id="AAK44747"/>
    </conflict>
    <text>Extended N-terminus.</text>
</comment>
<sequence>MTSQGDTTSGTQLKPPVEAVRSHYDKSNEFFKLWLDPSMTYSCAYFERPDMTLEEAQYAKRKLALDKLNLEPGMTLLDIGCGWGSTMRHAVAEYDVNVIGLTLSENQYAHDKAMFDEVDSPRRKEVRIQGWEEFDEPVDRIVSLGAFEHFADGAGDAGFERYDTFFKKFYNLTPDDGRMLLHTITIPDKEEAQELGLTSPMSLLRFIKFILTEIFPGGRLPRISQVDYYSSNAGWKVERYHRIGANYVPTLNAWADALQAHKDEAIALKGQETYDIYMHYLRGCSDLFRDKYTDVCQFTLVK</sequence>
<gene>
    <name type="primary">cmaA2</name>
    <name type="synonym">cma2</name>
    <name type="synonym">CMAS-2</name>
    <name type="ordered locus">MT0524</name>
</gene>
<accession>P9WPB4</accession>
<accession>L0T3U0</accession>
<accession>P0A5P0</accession>
<accession>Q11196</accession>
<organism>
    <name type="scientific">Mycobacterium tuberculosis (strain CDC 1551 / Oshkosh)</name>
    <dbReference type="NCBI Taxonomy" id="83331"/>
    <lineage>
        <taxon>Bacteria</taxon>
        <taxon>Bacillati</taxon>
        <taxon>Actinomycetota</taxon>
        <taxon>Actinomycetes</taxon>
        <taxon>Mycobacteriales</taxon>
        <taxon>Mycobacteriaceae</taxon>
        <taxon>Mycobacterium</taxon>
        <taxon>Mycobacterium tuberculosis complex</taxon>
    </lineage>
</organism>